<reference key="1">
    <citation type="journal article" date="2006" name="Genome Biol.">
        <title>The genome of Rhizobium leguminosarum has recognizable core and accessory components.</title>
        <authorList>
            <person name="Young J.P.W."/>
            <person name="Crossman L.C."/>
            <person name="Johnston A.W.B."/>
            <person name="Thomson N.R."/>
            <person name="Ghazoui Z.F."/>
            <person name="Hull K.H."/>
            <person name="Wexler M."/>
            <person name="Curson A.R.J."/>
            <person name="Todd J.D."/>
            <person name="Poole P.S."/>
            <person name="Mauchline T.H."/>
            <person name="East A.K."/>
            <person name="Quail M.A."/>
            <person name="Churcher C."/>
            <person name="Arrowsmith C."/>
            <person name="Cherevach I."/>
            <person name="Chillingworth T."/>
            <person name="Clarke K."/>
            <person name="Cronin A."/>
            <person name="Davis P."/>
            <person name="Fraser A."/>
            <person name="Hance Z."/>
            <person name="Hauser H."/>
            <person name="Jagels K."/>
            <person name="Moule S."/>
            <person name="Mungall K."/>
            <person name="Norbertczak H."/>
            <person name="Rabbinowitsch E."/>
            <person name="Sanders M."/>
            <person name="Simmonds M."/>
            <person name="Whitehead S."/>
            <person name="Parkhill J."/>
        </authorList>
    </citation>
    <scope>NUCLEOTIDE SEQUENCE [LARGE SCALE GENOMIC DNA]</scope>
    <source>
        <strain>DSM 114642 / LMG 32736 / 3841</strain>
    </source>
</reference>
<sequence length="87" mass="9923">MSDAHGVARDQLRAFIERIERLEEEKKTIADDIKDVYGEAKGMGFDTKILKKVVALRKKDEQERMEEEAILDTYLLALGMIESPPEG</sequence>
<dbReference type="EMBL" id="AM236080">
    <property type="protein sequence ID" value="CAK09554.1"/>
    <property type="molecule type" value="Genomic_DNA"/>
</dbReference>
<dbReference type="RefSeq" id="WP_003542853.1">
    <property type="nucleotide sequence ID" value="NC_008380.1"/>
</dbReference>
<dbReference type="SMR" id="Q1MBX8"/>
<dbReference type="EnsemblBacteria" id="CAK09554">
    <property type="protein sequence ID" value="CAK09554"/>
    <property type="gene ID" value="RL4065"/>
</dbReference>
<dbReference type="KEGG" id="rle:RL4065"/>
<dbReference type="eggNOG" id="COG3750">
    <property type="taxonomic scope" value="Bacteria"/>
</dbReference>
<dbReference type="HOGENOM" id="CLU_158651_3_0_5"/>
<dbReference type="Proteomes" id="UP000006575">
    <property type="component" value="Chromosome"/>
</dbReference>
<dbReference type="GO" id="GO:0003677">
    <property type="term" value="F:DNA binding"/>
    <property type="evidence" value="ECO:0007669"/>
    <property type="project" value="InterPro"/>
</dbReference>
<dbReference type="HAMAP" id="MF_00797">
    <property type="entry name" value="UPF0335"/>
    <property type="match status" value="1"/>
</dbReference>
<dbReference type="InterPro" id="IPR018753">
    <property type="entry name" value="GapR-like"/>
</dbReference>
<dbReference type="InterPro" id="IPR046367">
    <property type="entry name" value="GapR-like_DNA-bd"/>
</dbReference>
<dbReference type="NCBIfam" id="NF010247">
    <property type="entry name" value="PRK13694.1"/>
    <property type="match status" value="1"/>
</dbReference>
<dbReference type="Pfam" id="PF10073">
    <property type="entry name" value="GapR_DNA-bd"/>
    <property type="match status" value="1"/>
</dbReference>
<accession>Q1MBX8</accession>
<name>Y4065_RHIJ3</name>
<proteinExistence type="inferred from homology"/>
<evidence type="ECO:0000255" key="1">
    <source>
        <dbReference type="HAMAP-Rule" id="MF_00797"/>
    </source>
</evidence>
<organism>
    <name type="scientific">Rhizobium johnstonii (strain DSM 114642 / LMG 32736 / 3841)</name>
    <name type="common">Rhizobium leguminosarum bv. viciae</name>
    <dbReference type="NCBI Taxonomy" id="216596"/>
    <lineage>
        <taxon>Bacteria</taxon>
        <taxon>Pseudomonadati</taxon>
        <taxon>Pseudomonadota</taxon>
        <taxon>Alphaproteobacteria</taxon>
        <taxon>Hyphomicrobiales</taxon>
        <taxon>Rhizobiaceae</taxon>
        <taxon>Rhizobium/Agrobacterium group</taxon>
        <taxon>Rhizobium</taxon>
        <taxon>Rhizobium johnstonii</taxon>
    </lineage>
</organism>
<gene>
    <name type="ordered locus">RL4065</name>
</gene>
<protein>
    <recommendedName>
        <fullName evidence="1">UPF0335 protein RL4065</fullName>
    </recommendedName>
</protein>
<feature type="chain" id="PRO_1000046963" description="UPF0335 protein RL4065">
    <location>
        <begin position="1"/>
        <end position="87"/>
    </location>
</feature>
<comment type="similarity">
    <text evidence="1">Belongs to the UPF0335 family.</text>
</comment>